<evidence type="ECO:0000255" key="1">
    <source>
        <dbReference type="HAMAP-Rule" id="MF_01554"/>
    </source>
</evidence>
<keyword id="KW-0413">Isomerase</keyword>
<keyword id="KW-0460">Magnesium</keyword>
<keyword id="KW-0479">Metal-binding</keyword>
<keyword id="KW-0597">Phosphoprotein</keyword>
<name>GLMM_SOLUE</name>
<dbReference type="EC" id="5.4.2.10" evidence="1"/>
<dbReference type="EMBL" id="CP000473">
    <property type="protein sequence ID" value="ABJ82901.1"/>
    <property type="molecule type" value="Genomic_DNA"/>
</dbReference>
<dbReference type="SMR" id="Q027B2"/>
<dbReference type="FunCoup" id="Q027B2">
    <property type="interactions" value="463"/>
</dbReference>
<dbReference type="STRING" id="234267.Acid_1911"/>
<dbReference type="KEGG" id="sus:Acid_1911"/>
<dbReference type="eggNOG" id="COG1109">
    <property type="taxonomic scope" value="Bacteria"/>
</dbReference>
<dbReference type="HOGENOM" id="CLU_016950_7_0_0"/>
<dbReference type="InParanoid" id="Q027B2"/>
<dbReference type="OrthoDB" id="9806956at2"/>
<dbReference type="GO" id="GO:0005829">
    <property type="term" value="C:cytosol"/>
    <property type="evidence" value="ECO:0007669"/>
    <property type="project" value="TreeGrafter"/>
</dbReference>
<dbReference type="GO" id="GO:0000287">
    <property type="term" value="F:magnesium ion binding"/>
    <property type="evidence" value="ECO:0007669"/>
    <property type="project" value="UniProtKB-UniRule"/>
</dbReference>
<dbReference type="GO" id="GO:0008966">
    <property type="term" value="F:phosphoglucosamine mutase activity"/>
    <property type="evidence" value="ECO:0007669"/>
    <property type="project" value="UniProtKB-UniRule"/>
</dbReference>
<dbReference type="GO" id="GO:0004615">
    <property type="term" value="F:phosphomannomutase activity"/>
    <property type="evidence" value="ECO:0007669"/>
    <property type="project" value="TreeGrafter"/>
</dbReference>
<dbReference type="GO" id="GO:0005975">
    <property type="term" value="P:carbohydrate metabolic process"/>
    <property type="evidence" value="ECO:0007669"/>
    <property type="project" value="InterPro"/>
</dbReference>
<dbReference type="GO" id="GO:0009252">
    <property type="term" value="P:peptidoglycan biosynthetic process"/>
    <property type="evidence" value="ECO:0007669"/>
    <property type="project" value="TreeGrafter"/>
</dbReference>
<dbReference type="GO" id="GO:0006048">
    <property type="term" value="P:UDP-N-acetylglucosamine biosynthetic process"/>
    <property type="evidence" value="ECO:0007669"/>
    <property type="project" value="TreeGrafter"/>
</dbReference>
<dbReference type="CDD" id="cd05802">
    <property type="entry name" value="GlmM"/>
    <property type="match status" value="1"/>
</dbReference>
<dbReference type="FunFam" id="3.30.310.50:FF:000001">
    <property type="entry name" value="Phosphoglucosamine mutase"/>
    <property type="match status" value="1"/>
</dbReference>
<dbReference type="FunFam" id="3.40.120.10:FF:000001">
    <property type="entry name" value="Phosphoglucosamine mutase"/>
    <property type="match status" value="1"/>
</dbReference>
<dbReference type="FunFam" id="3.40.120.10:FF:000002">
    <property type="entry name" value="Phosphoglucosamine mutase"/>
    <property type="match status" value="1"/>
</dbReference>
<dbReference type="Gene3D" id="3.40.120.10">
    <property type="entry name" value="Alpha-D-Glucose-1,6-Bisphosphate, subunit A, domain 3"/>
    <property type="match status" value="3"/>
</dbReference>
<dbReference type="Gene3D" id="3.30.310.50">
    <property type="entry name" value="Alpha-D-phosphohexomutase, C-terminal domain"/>
    <property type="match status" value="1"/>
</dbReference>
<dbReference type="HAMAP" id="MF_01554_B">
    <property type="entry name" value="GlmM_B"/>
    <property type="match status" value="1"/>
</dbReference>
<dbReference type="InterPro" id="IPR005844">
    <property type="entry name" value="A-D-PHexomutase_a/b/a-I"/>
</dbReference>
<dbReference type="InterPro" id="IPR016055">
    <property type="entry name" value="A-D-PHexomutase_a/b/a-I/II/III"/>
</dbReference>
<dbReference type="InterPro" id="IPR005845">
    <property type="entry name" value="A-D-PHexomutase_a/b/a-II"/>
</dbReference>
<dbReference type="InterPro" id="IPR005846">
    <property type="entry name" value="A-D-PHexomutase_a/b/a-III"/>
</dbReference>
<dbReference type="InterPro" id="IPR005843">
    <property type="entry name" value="A-D-PHexomutase_C"/>
</dbReference>
<dbReference type="InterPro" id="IPR036900">
    <property type="entry name" value="A-D-PHexomutase_C_sf"/>
</dbReference>
<dbReference type="InterPro" id="IPR016066">
    <property type="entry name" value="A-D-PHexomutase_CS"/>
</dbReference>
<dbReference type="InterPro" id="IPR005841">
    <property type="entry name" value="Alpha-D-phosphohexomutase_SF"/>
</dbReference>
<dbReference type="InterPro" id="IPR006352">
    <property type="entry name" value="GlmM_bact"/>
</dbReference>
<dbReference type="InterPro" id="IPR050060">
    <property type="entry name" value="Phosphoglucosamine_mutase"/>
</dbReference>
<dbReference type="NCBIfam" id="TIGR01455">
    <property type="entry name" value="glmM"/>
    <property type="match status" value="1"/>
</dbReference>
<dbReference type="PANTHER" id="PTHR42946:SF1">
    <property type="entry name" value="PHOSPHOGLUCOMUTASE (ALPHA-D-GLUCOSE-1,6-BISPHOSPHATE-DEPENDENT)"/>
    <property type="match status" value="1"/>
</dbReference>
<dbReference type="PANTHER" id="PTHR42946">
    <property type="entry name" value="PHOSPHOHEXOSE MUTASE"/>
    <property type="match status" value="1"/>
</dbReference>
<dbReference type="Pfam" id="PF02878">
    <property type="entry name" value="PGM_PMM_I"/>
    <property type="match status" value="1"/>
</dbReference>
<dbReference type="Pfam" id="PF02879">
    <property type="entry name" value="PGM_PMM_II"/>
    <property type="match status" value="1"/>
</dbReference>
<dbReference type="Pfam" id="PF02880">
    <property type="entry name" value="PGM_PMM_III"/>
    <property type="match status" value="1"/>
</dbReference>
<dbReference type="Pfam" id="PF00408">
    <property type="entry name" value="PGM_PMM_IV"/>
    <property type="match status" value="1"/>
</dbReference>
<dbReference type="PRINTS" id="PR00509">
    <property type="entry name" value="PGMPMM"/>
</dbReference>
<dbReference type="SUPFAM" id="SSF55957">
    <property type="entry name" value="Phosphoglucomutase, C-terminal domain"/>
    <property type="match status" value="1"/>
</dbReference>
<dbReference type="SUPFAM" id="SSF53738">
    <property type="entry name" value="Phosphoglucomutase, first 3 domains"/>
    <property type="match status" value="3"/>
</dbReference>
<dbReference type="PROSITE" id="PS00710">
    <property type="entry name" value="PGM_PMM"/>
    <property type="match status" value="1"/>
</dbReference>
<feature type="chain" id="PRO_0000305679" description="Phosphoglucosamine mutase">
    <location>
        <begin position="1"/>
        <end position="446"/>
    </location>
</feature>
<feature type="active site" description="Phosphoserine intermediate" evidence="1">
    <location>
        <position position="102"/>
    </location>
</feature>
<feature type="binding site" description="via phosphate group" evidence="1">
    <location>
        <position position="102"/>
    </location>
    <ligand>
        <name>Mg(2+)</name>
        <dbReference type="ChEBI" id="CHEBI:18420"/>
    </ligand>
</feature>
<feature type="binding site" evidence="1">
    <location>
        <position position="239"/>
    </location>
    <ligand>
        <name>Mg(2+)</name>
        <dbReference type="ChEBI" id="CHEBI:18420"/>
    </ligand>
</feature>
<feature type="binding site" evidence="1">
    <location>
        <position position="241"/>
    </location>
    <ligand>
        <name>Mg(2+)</name>
        <dbReference type="ChEBI" id="CHEBI:18420"/>
    </ligand>
</feature>
<feature type="binding site" evidence="1">
    <location>
        <position position="243"/>
    </location>
    <ligand>
        <name>Mg(2+)</name>
        <dbReference type="ChEBI" id="CHEBI:18420"/>
    </ligand>
</feature>
<feature type="modified residue" description="Phosphoserine" evidence="1">
    <location>
        <position position="102"/>
    </location>
</feature>
<proteinExistence type="inferred from homology"/>
<reference key="1">
    <citation type="journal article" date="2009" name="Appl. Environ. Microbiol.">
        <title>Three genomes from the phylum Acidobacteria provide insight into the lifestyles of these microorganisms in soils.</title>
        <authorList>
            <person name="Ward N.L."/>
            <person name="Challacombe J.F."/>
            <person name="Janssen P.H."/>
            <person name="Henrissat B."/>
            <person name="Coutinho P.M."/>
            <person name="Wu M."/>
            <person name="Xie G."/>
            <person name="Haft D.H."/>
            <person name="Sait M."/>
            <person name="Badger J."/>
            <person name="Barabote R.D."/>
            <person name="Bradley B."/>
            <person name="Brettin T.S."/>
            <person name="Brinkac L.M."/>
            <person name="Bruce D."/>
            <person name="Creasy T."/>
            <person name="Daugherty S.C."/>
            <person name="Davidsen T.M."/>
            <person name="DeBoy R.T."/>
            <person name="Detter J.C."/>
            <person name="Dodson R.J."/>
            <person name="Durkin A.S."/>
            <person name="Ganapathy A."/>
            <person name="Gwinn-Giglio M."/>
            <person name="Han C.S."/>
            <person name="Khouri H."/>
            <person name="Kiss H."/>
            <person name="Kothari S.P."/>
            <person name="Madupu R."/>
            <person name="Nelson K.E."/>
            <person name="Nelson W.C."/>
            <person name="Paulsen I."/>
            <person name="Penn K."/>
            <person name="Ren Q."/>
            <person name="Rosovitz M.J."/>
            <person name="Selengut J.D."/>
            <person name="Shrivastava S."/>
            <person name="Sullivan S.A."/>
            <person name="Tapia R."/>
            <person name="Thompson L.S."/>
            <person name="Watkins K.L."/>
            <person name="Yang Q."/>
            <person name="Yu C."/>
            <person name="Zafar N."/>
            <person name="Zhou L."/>
            <person name="Kuske C.R."/>
        </authorList>
    </citation>
    <scope>NUCLEOTIDE SEQUENCE [LARGE SCALE GENOMIC DNA]</scope>
    <source>
        <strain>Ellin6076</strain>
    </source>
</reference>
<protein>
    <recommendedName>
        <fullName evidence="1">Phosphoglucosamine mutase</fullName>
        <ecNumber evidence="1">5.4.2.10</ecNumber>
    </recommendedName>
</protein>
<organism>
    <name type="scientific">Solibacter usitatus (strain Ellin6076)</name>
    <dbReference type="NCBI Taxonomy" id="234267"/>
    <lineage>
        <taxon>Bacteria</taxon>
        <taxon>Pseudomonadati</taxon>
        <taxon>Acidobacteriota</taxon>
        <taxon>Terriglobia</taxon>
        <taxon>Bryobacterales</taxon>
        <taxon>Solibacteraceae</taxon>
        <taxon>Candidatus Solibacter</taxon>
    </lineage>
</organism>
<gene>
    <name evidence="1" type="primary">glmM</name>
    <name type="ordered locus">Acid_1911</name>
</gene>
<accession>Q027B2</accession>
<comment type="function">
    <text evidence="1">Catalyzes the conversion of glucosamine-6-phosphate to glucosamine-1-phosphate.</text>
</comment>
<comment type="catalytic activity">
    <reaction evidence="1">
        <text>alpha-D-glucosamine 1-phosphate = D-glucosamine 6-phosphate</text>
        <dbReference type="Rhea" id="RHEA:23424"/>
        <dbReference type="ChEBI" id="CHEBI:58516"/>
        <dbReference type="ChEBI" id="CHEBI:58725"/>
        <dbReference type="EC" id="5.4.2.10"/>
    </reaction>
</comment>
<comment type="cofactor">
    <cofactor evidence="1">
        <name>Mg(2+)</name>
        <dbReference type="ChEBI" id="CHEBI:18420"/>
    </cofactor>
    <text evidence="1">Binds 1 Mg(2+) ion per subunit.</text>
</comment>
<comment type="PTM">
    <text evidence="1">Activated by phosphorylation.</text>
</comment>
<comment type="similarity">
    <text evidence="1">Belongs to the phosphohexose mutase family.</text>
</comment>
<sequence>MAKDLFGTDGIRGVAGQYPLDRDTVYAFGVALGKDAALHAAKPEILIGADTRESGTWIAELVAGGLASQGAQVRYAGVITTPGVAYLTRTGSFVAGVMISASHNPYDDNGLKVFGHSGFKLPDDEELLIEQEIFRLREAPVAPQPLSLTVEEPLVRQYLKYLSGISSVRLDGVRVAIDCGNGASYRLAPELFQGLGADVVTICCEPNGRNINLNCGALHLEALQQAVVAHRAHFGVAFDGDADRAIFVSSSGQVVNGDAVLLACGRALKAAGKLAGNTVVSTVMSNLGLERAFDAAGIRMVRTPVGDKYVLEEMVRLGAALGGEQSGHVIFREYSTTGDGMLTALRLFEIAQQAGTGLDELTADLKIYPQRLVNVRVREKKGLLELPAVAKEIRRVEDAFGGAGRVLVRFSGTEPLARVMVEGPNLEQVESFSTSIADVIRREMGE</sequence>